<evidence type="ECO:0000255" key="1">
    <source>
        <dbReference type="HAMAP-Rule" id="MF_01227"/>
    </source>
</evidence>
<accession>Q5M6C0</accession>
<reference key="1">
    <citation type="journal article" date="2004" name="Nat. Biotechnol.">
        <title>Complete sequence and comparative genome analysis of the dairy bacterium Streptococcus thermophilus.</title>
        <authorList>
            <person name="Bolotin A."/>
            <person name="Quinquis B."/>
            <person name="Renault P."/>
            <person name="Sorokin A."/>
            <person name="Ehrlich S.D."/>
            <person name="Kulakauskas S."/>
            <person name="Lapidus A."/>
            <person name="Goltsman E."/>
            <person name="Mazur M."/>
            <person name="Pusch G.D."/>
            <person name="Fonstein M."/>
            <person name="Overbeek R."/>
            <person name="Kyprides N."/>
            <person name="Purnelle B."/>
            <person name="Prozzi D."/>
            <person name="Ngui K."/>
            <person name="Masuy D."/>
            <person name="Hancy F."/>
            <person name="Burteau S."/>
            <person name="Boutry M."/>
            <person name="Delcour J."/>
            <person name="Goffeau A."/>
            <person name="Hols P."/>
        </authorList>
    </citation>
    <scope>NUCLEOTIDE SEQUENCE [LARGE SCALE GENOMIC DNA]</scope>
    <source>
        <strain>ATCC BAA-250 / LMG 18311</strain>
    </source>
</reference>
<keyword id="KW-0067">ATP-binding</keyword>
<keyword id="KW-0315">Glutamine amidotransferase</keyword>
<keyword id="KW-0436">Ligase</keyword>
<keyword id="KW-0460">Magnesium</keyword>
<keyword id="KW-0479">Metal-binding</keyword>
<keyword id="KW-0547">Nucleotide-binding</keyword>
<keyword id="KW-0665">Pyrimidine biosynthesis</keyword>
<keyword id="KW-1185">Reference proteome</keyword>
<organism>
    <name type="scientific">Streptococcus thermophilus (strain ATCC BAA-250 / LMG 18311)</name>
    <dbReference type="NCBI Taxonomy" id="264199"/>
    <lineage>
        <taxon>Bacteria</taxon>
        <taxon>Bacillati</taxon>
        <taxon>Bacillota</taxon>
        <taxon>Bacilli</taxon>
        <taxon>Lactobacillales</taxon>
        <taxon>Streptococcaceae</taxon>
        <taxon>Streptococcus</taxon>
    </lineage>
</organism>
<gene>
    <name evidence="1" type="primary">pyrG</name>
    <name type="ordered locus">stu0134</name>
</gene>
<name>PYRG_STRT2</name>
<protein>
    <recommendedName>
        <fullName evidence="1">CTP synthase</fullName>
        <ecNumber evidence="1">6.3.4.2</ecNumber>
    </recommendedName>
    <alternativeName>
        <fullName evidence="1">Cytidine 5'-triphosphate synthase</fullName>
    </alternativeName>
    <alternativeName>
        <fullName evidence="1">Cytidine triphosphate synthetase</fullName>
        <shortName evidence="1">CTP synthetase</shortName>
        <shortName evidence="1">CTPS</shortName>
    </alternativeName>
    <alternativeName>
        <fullName evidence="1">UTP--ammonia ligase</fullName>
    </alternativeName>
</protein>
<comment type="function">
    <text evidence="1">Catalyzes the ATP-dependent amination of UTP to CTP with either L-glutamine or ammonia as the source of nitrogen. Regulates intracellular CTP levels through interactions with the four ribonucleotide triphosphates.</text>
</comment>
<comment type="catalytic activity">
    <reaction evidence="1">
        <text>UTP + L-glutamine + ATP + H2O = CTP + L-glutamate + ADP + phosphate + 2 H(+)</text>
        <dbReference type="Rhea" id="RHEA:26426"/>
        <dbReference type="ChEBI" id="CHEBI:15377"/>
        <dbReference type="ChEBI" id="CHEBI:15378"/>
        <dbReference type="ChEBI" id="CHEBI:29985"/>
        <dbReference type="ChEBI" id="CHEBI:30616"/>
        <dbReference type="ChEBI" id="CHEBI:37563"/>
        <dbReference type="ChEBI" id="CHEBI:43474"/>
        <dbReference type="ChEBI" id="CHEBI:46398"/>
        <dbReference type="ChEBI" id="CHEBI:58359"/>
        <dbReference type="ChEBI" id="CHEBI:456216"/>
        <dbReference type="EC" id="6.3.4.2"/>
    </reaction>
</comment>
<comment type="catalytic activity">
    <reaction evidence="1">
        <text>L-glutamine + H2O = L-glutamate + NH4(+)</text>
        <dbReference type="Rhea" id="RHEA:15889"/>
        <dbReference type="ChEBI" id="CHEBI:15377"/>
        <dbReference type="ChEBI" id="CHEBI:28938"/>
        <dbReference type="ChEBI" id="CHEBI:29985"/>
        <dbReference type="ChEBI" id="CHEBI:58359"/>
    </reaction>
</comment>
<comment type="catalytic activity">
    <reaction evidence="1">
        <text>UTP + NH4(+) + ATP = CTP + ADP + phosphate + 2 H(+)</text>
        <dbReference type="Rhea" id="RHEA:16597"/>
        <dbReference type="ChEBI" id="CHEBI:15378"/>
        <dbReference type="ChEBI" id="CHEBI:28938"/>
        <dbReference type="ChEBI" id="CHEBI:30616"/>
        <dbReference type="ChEBI" id="CHEBI:37563"/>
        <dbReference type="ChEBI" id="CHEBI:43474"/>
        <dbReference type="ChEBI" id="CHEBI:46398"/>
        <dbReference type="ChEBI" id="CHEBI:456216"/>
    </reaction>
</comment>
<comment type="activity regulation">
    <text evidence="1">Allosterically activated by GTP, when glutamine is the substrate; GTP has no effect on the reaction when ammonia is the substrate. The allosteric effector GTP functions by stabilizing the protein conformation that binds the tetrahedral intermediate(s) formed during glutamine hydrolysis. Inhibited by the product CTP, via allosteric rather than competitive inhibition.</text>
</comment>
<comment type="pathway">
    <text evidence="1">Pyrimidine metabolism; CTP biosynthesis via de novo pathway; CTP from UDP: step 2/2.</text>
</comment>
<comment type="subunit">
    <text evidence="1">Homotetramer.</text>
</comment>
<comment type="miscellaneous">
    <text evidence="1">CTPSs have evolved a hybrid strategy for distinguishing between UTP and CTP. The overlapping regions of the product feedback inhibitory and substrate sites recognize a common feature in both compounds, the triphosphate moiety. To differentiate isosteric substrate and product pyrimidine rings, an additional pocket far from the expected kinase/ligase catalytic site, specifically recognizes the cytosine and ribose portions of the product inhibitor.</text>
</comment>
<comment type="similarity">
    <text evidence="1">Belongs to the CTP synthase family.</text>
</comment>
<dbReference type="EC" id="6.3.4.2" evidence="1"/>
<dbReference type="EMBL" id="CP000023">
    <property type="protein sequence ID" value="AAV59859.1"/>
    <property type="molecule type" value="Genomic_DNA"/>
</dbReference>
<dbReference type="RefSeq" id="WP_002949230.1">
    <property type="nucleotide sequence ID" value="NC_006448.1"/>
</dbReference>
<dbReference type="SMR" id="Q5M6C0"/>
<dbReference type="STRING" id="264199.stu0134"/>
<dbReference type="KEGG" id="stl:stu0134"/>
<dbReference type="eggNOG" id="COG0504">
    <property type="taxonomic scope" value="Bacteria"/>
</dbReference>
<dbReference type="HOGENOM" id="CLU_011675_5_0_9"/>
<dbReference type="UniPathway" id="UPA00159">
    <property type="reaction ID" value="UER00277"/>
</dbReference>
<dbReference type="Proteomes" id="UP000001170">
    <property type="component" value="Chromosome"/>
</dbReference>
<dbReference type="GO" id="GO:0005829">
    <property type="term" value="C:cytosol"/>
    <property type="evidence" value="ECO:0007669"/>
    <property type="project" value="TreeGrafter"/>
</dbReference>
<dbReference type="GO" id="GO:0005524">
    <property type="term" value="F:ATP binding"/>
    <property type="evidence" value="ECO:0007669"/>
    <property type="project" value="UniProtKB-KW"/>
</dbReference>
<dbReference type="GO" id="GO:0003883">
    <property type="term" value="F:CTP synthase activity"/>
    <property type="evidence" value="ECO:0007669"/>
    <property type="project" value="UniProtKB-UniRule"/>
</dbReference>
<dbReference type="GO" id="GO:0004359">
    <property type="term" value="F:glutaminase activity"/>
    <property type="evidence" value="ECO:0007669"/>
    <property type="project" value="RHEA"/>
</dbReference>
<dbReference type="GO" id="GO:0042802">
    <property type="term" value="F:identical protein binding"/>
    <property type="evidence" value="ECO:0007669"/>
    <property type="project" value="TreeGrafter"/>
</dbReference>
<dbReference type="GO" id="GO:0046872">
    <property type="term" value="F:metal ion binding"/>
    <property type="evidence" value="ECO:0007669"/>
    <property type="project" value="UniProtKB-KW"/>
</dbReference>
<dbReference type="GO" id="GO:0044210">
    <property type="term" value="P:'de novo' CTP biosynthetic process"/>
    <property type="evidence" value="ECO:0007669"/>
    <property type="project" value="UniProtKB-UniRule"/>
</dbReference>
<dbReference type="GO" id="GO:0019856">
    <property type="term" value="P:pyrimidine nucleobase biosynthetic process"/>
    <property type="evidence" value="ECO:0007669"/>
    <property type="project" value="TreeGrafter"/>
</dbReference>
<dbReference type="CDD" id="cd03113">
    <property type="entry name" value="CTPS_N"/>
    <property type="match status" value="1"/>
</dbReference>
<dbReference type="CDD" id="cd01746">
    <property type="entry name" value="GATase1_CTP_Synthase"/>
    <property type="match status" value="1"/>
</dbReference>
<dbReference type="FunFam" id="3.40.50.300:FF:000009">
    <property type="entry name" value="CTP synthase"/>
    <property type="match status" value="1"/>
</dbReference>
<dbReference type="FunFam" id="3.40.50.880:FF:000002">
    <property type="entry name" value="CTP synthase"/>
    <property type="match status" value="1"/>
</dbReference>
<dbReference type="Gene3D" id="3.40.50.880">
    <property type="match status" value="1"/>
</dbReference>
<dbReference type="Gene3D" id="3.40.50.300">
    <property type="entry name" value="P-loop containing nucleotide triphosphate hydrolases"/>
    <property type="match status" value="1"/>
</dbReference>
<dbReference type="HAMAP" id="MF_01227">
    <property type="entry name" value="PyrG"/>
    <property type="match status" value="1"/>
</dbReference>
<dbReference type="InterPro" id="IPR029062">
    <property type="entry name" value="Class_I_gatase-like"/>
</dbReference>
<dbReference type="InterPro" id="IPR004468">
    <property type="entry name" value="CTP_synthase"/>
</dbReference>
<dbReference type="InterPro" id="IPR017456">
    <property type="entry name" value="CTP_synthase_N"/>
</dbReference>
<dbReference type="InterPro" id="IPR017926">
    <property type="entry name" value="GATASE"/>
</dbReference>
<dbReference type="InterPro" id="IPR033828">
    <property type="entry name" value="GATase1_CTP_Synthase"/>
</dbReference>
<dbReference type="InterPro" id="IPR027417">
    <property type="entry name" value="P-loop_NTPase"/>
</dbReference>
<dbReference type="NCBIfam" id="NF003792">
    <property type="entry name" value="PRK05380.1"/>
    <property type="match status" value="1"/>
</dbReference>
<dbReference type="NCBIfam" id="TIGR00337">
    <property type="entry name" value="PyrG"/>
    <property type="match status" value="1"/>
</dbReference>
<dbReference type="PANTHER" id="PTHR11550">
    <property type="entry name" value="CTP SYNTHASE"/>
    <property type="match status" value="1"/>
</dbReference>
<dbReference type="PANTHER" id="PTHR11550:SF0">
    <property type="entry name" value="CTP SYNTHASE-RELATED"/>
    <property type="match status" value="1"/>
</dbReference>
<dbReference type="Pfam" id="PF06418">
    <property type="entry name" value="CTP_synth_N"/>
    <property type="match status" value="1"/>
</dbReference>
<dbReference type="Pfam" id="PF00117">
    <property type="entry name" value="GATase"/>
    <property type="match status" value="1"/>
</dbReference>
<dbReference type="SUPFAM" id="SSF52317">
    <property type="entry name" value="Class I glutamine amidotransferase-like"/>
    <property type="match status" value="1"/>
</dbReference>
<dbReference type="SUPFAM" id="SSF52540">
    <property type="entry name" value="P-loop containing nucleoside triphosphate hydrolases"/>
    <property type="match status" value="1"/>
</dbReference>
<dbReference type="PROSITE" id="PS51273">
    <property type="entry name" value="GATASE_TYPE_1"/>
    <property type="match status" value="1"/>
</dbReference>
<feature type="chain" id="PRO_0000266236" description="CTP synthase">
    <location>
        <begin position="1"/>
        <end position="534"/>
    </location>
</feature>
<feature type="domain" description="Glutamine amidotransferase type-1" evidence="1">
    <location>
        <begin position="292"/>
        <end position="534"/>
    </location>
</feature>
<feature type="region of interest" description="Amidoligase domain" evidence="1">
    <location>
        <begin position="1"/>
        <end position="267"/>
    </location>
</feature>
<feature type="active site" description="Nucleophile; for glutamine hydrolysis" evidence="1">
    <location>
        <position position="381"/>
    </location>
</feature>
<feature type="active site" evidence="1">
    <location>
        <position position="508"/>
    </location>
</feature>
<feature type="active site" evidence="1">
    <location>
        <position position="510"/>
    </location>
</feature>
<feature type="binding site" evidence="1">
    <location>
        <position position="13"/>
    </location>
    <ligand>
        <name>CTP</name>
        <dbReference type="ChEBI" id="CHEBI:37563"/>
        <note>allosteric inhibitor</note>
    </ligand>
</feature>
<feature type="binding site" evidence="1">
    <location>
        <position position="13"/>
    </location>
    <ligand>
        <name>UTP</name>
        <dbReference type="ChEBI" id="CHEBI:46398"/>
    </ligand>
</feature>
<feature type="binding site" evidence="1">
    <location>
        <begin position="14"/>
        <end position="19"/>
    </location>
    <ligand>
        <name>ATP</name>
        <dbReference type="ChEBI" id="CHEBI:30616"/>
    </ligand>
</feature>
<feature type="binding site" evidence="1">
    <location>
        <position position="54"/>
    </location>
    <ligand>
        <name>L-glutamine</name>
        <dbReference type="ChEBI" id="CHEBI:58359"/>
    </ligand>
</feature>
<feature type="binding site" evidence="1">
    <location>
        <position position="71"/>
    </location>
    <ligand>
        <name>ATP</name>
        <dbReference type="ChEBI" id="CHEBI:30616"/>
    </ligand>
</feature>
<feature type="binding site" evidence="1">
    <location>
        <position position="71"/>
    </location>
    <ligand>
        <name>Mg(2+)</name>
        <dbReference type="ChEBI" id="CHEBI:18420"/>
    </ligand>
</feature>
<feature type="binding site" evidence="1">
    <location>
        <position position="141"/>
    </location>
    <ligand>
        <name>Mg(2+)</name>
        <dbReference type="ChEBI" id="CHEBI:18420"/>
    </ligand>
</feature>
<feature type="binding site" evidence="1">
    <location>
        <begin position="148"/>
        <end position="150"/>
    </location>
    <ligand>
        <name>CTP</name>
        <dbReference type="ChEBI" id="CHEBI:37563"/>
        <note>allosteric inhibitor</note>
    </ligand>
</feature>
<feature type="binding site" evidence="1">
    <location>
        <begin position="188"/>
        <end position="193"/>
    </location>
    <ligand>
        <name>CTP</name>
        <dbReference type="ChEBI" id="CHEBI:37563"/>
        <note>allosteric inhibitor</note>
    </ligand>
</feature>
<feature type="binding site" evidence="1">
    <location>
        <begin position="188"/>
        <end position="193"/>
    </location>
    <ligand>
        <name>UTP</name>
        <dbReference type="ChEBI" id="CHEBI:46398"/>
    </ligand>
</feature>
<feature type="binding site" evidence="1">
    <location>
        <position position="224"/>
    </location>
    <ligand>
        <name>CTP</name>
        <dbReference type="ChEBI" id="CHEBI:37563"/>
        <note>allosteric inhibitor</note>
    </ligand>
</feature>
<feature type="binding site" evidence="1">
    <location>
        <position position="224"/>
    </location>
    <ligand>
        <name>UTP</name>
        <dbReference type="ChEBI" id="CHEBI:46398"/>
    </ligand>
</feature>
<feature type="binding site" evidence="1">
    <location>
        <position position="354"/>
    </location>
    <ligand>
        <name>L-glutamine</name>
        <dbReference type="ChEBI" id="CHEBI:58359"/>
    </ligand>
</feature>
<feature type="binding site" evidence="1">
    <location>
        <begin position="382"/>
        <end position="385"/>
    </location>
    <ligand>
        <name>L-glutamine</name>
        <dbReference type="ChEBI" id="CHEBI:58359"/>
    </ligand>
</feature>
<feature type="binding site" evidence="1">
    <location>
        <position position="405"/>
    </location>
    <ligand>
        <name>L-glutamine</name>
        <dbReference type="ChEBI" id="CHEBI:58359"/>
    </ligand>
</feature>
<feature type="binding site" evidence="1">
    <location>
        <position position="463"/>
    </location>
    <ligand>
        <name>L-glutamine</name>
        <dbReference type="ChEBI" id="CHEBI:58359"/>
    </ligand>
</feature>
<sequence length="534" mass="59067">MTKYIFVTGGVVSSIGKGIVAASLGRLLKNRGLKVTIQKFDPYINIDPGTMSPYQHGEVYVTDDGAETDLDLGHYERFIDINLNKYSNVTTGKIYSEVLRKERKGEYLGATVQVIPHITDALKDKIKRAATTTDSDVVITEVGGTVGDIESLPFLEALRQMKADVGSDNVMYIHTTLLPYLKAAGEMKTKPTQHSVKELRGLGIQPNMLVIRTEEPAGQGIKNKLAQFCDVAPEAVIESLDVEHIYQVPLNMQAQGMDQIVCDHLKLNAPAADMTEWSAMVDKVLNLKKTTKIALVGKYVELHDAYLSVVEALKHSGLANDTAIDIDWVNANDLTAENVASRLADADGIIVPGGFGQRGTEGKIQAIRYARENDVPMLGVCLGMQLTCIEFARHVLHLDGANSAELDPETQYPIIDIMRDQIDIEDMGGTLRLGLYPCKLKPGSKAAAAYGNQEVVQRRHRHRYEFNTKFREQFEAEGFVFSGVSPDNRLMEVVELPDKKFFVAAQYHPEYHSRPNHAEELYSAFVTAAVENAK</sequence>
<proteinExistence type="inferred from homology"/>